<name>RL16_MYCSJ</name>
<proteinExistence type="inferred from homology"/>
<protein>
    <recommendedName>
        <fullName evidence="1">Large ribosomal subunit protein uL16</fullName>
    </recommendedName>
    <alternativeName>
        <fullName evidence="3">50S ribosomal protein L16</fullName>
    </alternativeName>
</protein>
<keyword id="KW-0687">Ribonucleoprotein</keyword>
<keyword id="KW-0689">Ribosomal protein</keyword>
<keyword id="KW-0694">RNA-binding</keyword>
<keyword id="KW-0699">rRNA-binding</keyword>
<keyword id="KW-0820">tRNA-binding</keyword>
<comment type="function">
    <text evidence="1">Binds 23S rRNA and is also seen to make contacts with the A and possibly P site tRNAs.</text>
</comment>
<comment type="subunit">
    <text evidence="1">Part of the 50S ribosomal subunit.</text>
</comment>
<comment type="similarity">
    <text evidence="1">Belongs to the universal ribosomal protein uL16 family.</text>
</comment>
<sequence>MLIPRKVKHRKQHHPRQRGIASGGTTVSFGDYGIQALEHAYITNRQIESARIAINRHIKRGGKVWINIFPDRPLTKKPAETRMGSGKGSPEWWVANVKPGRVLFELSYPDEKTARDALTRAIHKLPIKARIVTREENF</sequence>
<gene>
    <name evidence="1" type="primary">rplP</name>
    <name type="ordered locus">Mjls_1047</name>
</gene>
<reference key="1">
    <citation type="submission" date="2007-02" db="EMBL/GenBank/DDBJ databases">
        <title>Complete sequence of Mycobacterium sp. JLS.</title>
        <authorList>
            <consortium name="US DOE Joint Genome Institute"/>
            <person name="Copeland A."/>
            <person name="Lucas S."/>
            <person name="Lapidus A."/>
            <person name="Barry K."/>
            <person name="Detter J.C."/>
            <person name="Glavina del Rio T."/>
            <person name="Hammon N."/>
            <person name="Israni S."/>
            <person name="Dalin E."/>
            <person name="Tice H."/>
            <person name="Pitluck S."/>
            <person name="Chain P."/>
            <person name="Malfatti S."/>
            <person name="Shin M."/>
            <person name="Vergez L."/>
            <person name="Schmutz J."/>
            <person name="Larimer F."/>
            <person name="Land M."/>
            <person name="Hauser L."/>
            <person name="Kyrpides N."/>
            <person name="Mikhailova N."/>
            <person name="Miller C.D."/>
            <person name="Anderson A.J."/>
            <person name="Sims R.C."/>
            <person name="Richardson P."/>
        </authorList>
    </citation>
    <scope>NUCLEOTIDE SEQUENCE [LARGE SCALE GENOMIC DNA]</scope>
    <source>
        <strain>JLS</strain>
    </source>
</reference>
<accession>A3PVC8</accession>
<dbReference type="EMBL" id="CP000580">
    <property type="protein sequence ID" value="ABN96855.1"/>
    <property type="molecule type" value="Genomic_DNA"/>
</dbReference>
<dbReference type="SMR" id="A3PVC8"/>
<dbReference type="KEGG" id="mjl:Mjls_1047"/>
<dbReference type="HOGENOM" id="CLU_078858_2_1_11"/>
<dbReference type="BioCyc" id="MSP164757:G1G8C-1060-MONOMER"/>
<dbReference type="GO" id="GO:0022625">
    <property type="term" value="C:cytosolic large ribosomal subunit"/>
    <property type="evidence" value="ECO:0007669"/>
    <property type="project" value="TreeGrafter"/>
</dbReference>
<dbReference type="GO" id="GO:0019843">
    <property type="term" value="F:rRNA binding"/>
    <property type="evidence" value="ECO:0007669"/>
    <property type="project" value="UniProtKB-UniRule"/>
</dbReference>
<dbReference type="GO" id="GO:0003735">
    <property type="term" value="F:structural constituent of ribosome"/>
    <property type="evidence" value="ECO:0007669"/>
    <property type="project" value="InterPro"/>
</dbReference>
<dbReference type="GO" id="GO:0000049">
    <property type="term" value="F:tRNA binding"/>
    <property type="evidence" value="ECO:0007669"/>
    <property type="project" value="UniProtKB-KW"/>
</dbReference>
<dbReference type="GO" id="GO:0006412">
    <property type="term" value="P:translation"/>
    <property type="evidence" value="ECO:0007669"/>
    <property type="project" value="UniProtKB-UniRule"/>
</dbReference>
<dbReference type="CDD" id="cd01433">
    <property type="entry name" value="Ribosomal_L16_L10e"/>
    <property type="match status" value="1"/>
</dbReference>
<dbReference type="FunFam" id="3.90.1170.10:FF:000001">
    <property type="entry name" value="50S ribosomal protein L16"/>
    <property type="match status" value="1"/>
</dbReference>
<dbReference type="Gene3D" id="3.90.1170.10">
    <property type="entry name" value="Ribosomal protein L10e/L16"/>
    <property type="match status" value="1"/>
</dbReference>
<dbReference type="HAMAP" id="MF_01342">
    <property type="entry name" value="Ribosomal_uL16"/>
    <property type="match status" value="1"/>
</dbReference>
<dbReference type="InterPro" id="IPR047873">
    <property type="entry name" value="Ribosomal_uL16"/>
</dbReference>
<dbReference type="InterPro" id="IPR000114">
    <property type="entry name" value="Ribosomal_uL16_bact-type"/>
</dbReference>
<dbReference type="InterPro" id="IPR020798">
    <property type="entry name" value="Ribosomal_uL16_CS"/>
</dbReference>
<dbReference type="InterPro" id="IPR016180">
    <property type="entry name" value="Ribosomal_uL16_dom"/>
</dbReference>
<dbReference type="InterPro" id="IPR036920">
    <property type="entry name" value="Ribosomal_uL16_sf"/>
</dbReference>
<dbReference type="NCBIfam" id="TIGR01164">
    <property type="entry name" value="rplP_bact"/>
    <property type="match status" value="1"/>
</dbReference>
<dbReference type="PANTHER" id="PTHR12220">
    <property type="entry name" value="50S/60S RIBOSOMAL PROTEIN L16"/>
    <property type="match status" value="1"/>
</dbReference>
<dbReference type="PANTHER" id="PTHR12220:SF13">
    <property type="entry name" value="LARGE RIBOSOMAL SUBUNIT PROTEIN UL16M"/>
    <property type="match status" value="1"/>
</dbReference>
<dbReference type="Pfam" id="PF00252">
    <property type="entry name" value="Ribosomal_L16"/>
    <property type="match status" value="1"/>
</dbReference>
<dbReference type="PRINTS" id="PR00060">
    <property type="entry name" value="RIBOSOMALL16"/>
</dbReference>
<dbReference type="SUPFAM" id="SSF54686">
    <property type="entry name" value="Ribosomal protein L16p/L10e"/>
    <property type="match status" value="1"/>
</dbReference>
<dbReference type="PROSITE" id="PS00586">
    <property type="entry name" value="RIBOSOMAL_L16_1"/>
    <property type="match status" value="1"/>
</dbReference>
<dbReference type="PROSITE" id="PS00701">
    <property type="entry name" value="RIBOSOMAL_L16_2"/>
    <property type="match status" value="1"/>
</dbReference>
<feature type="chain" id="PRO_1000054655" description="Large ribosomal subunit protein uL16">
    <location>
        <begin position="1"/>
        <end position="138"/>
    </location>
</feature>
<feature type="region of interest" description="Disordered" evidence="2">
    <location>
        <begin position="1"/>
        <end position="23"/>
    </location>
</feature>
<feature type="compositionally biased region" description="Basic residues" evidence="2">
    <location>
        <begin position="1"/>
        <end position="17"/>
    </location>
</feature>
<evidence type="ECO:0000255" key="1">
    <source>
        <dbReference type="HAMAP-Rule" id="MF_01342"/>
    </source>
</evidence>
<evidence type="ECO:0000256" key="2">
    <source>
        <dbReference type="SAM" id="MobiDB-lite"/>
    </source>
</evidence>
<evidence type="ECO:0000305" key="3"/>
<organism>
    <name type="scientific">Mycobacterium sp. (strain JLS)</name>
    <dbReference type="NCBI Taxonomy" id="164757"/>
    <lineage>
        <taxon>Bacteria</taxon>
        <taxon>Bacillati</taxon>
        <taxon>Actinomycetota</taxon>
        <taxon>Actinomycetes</taxon>
        <taxon>Mycobacteriales</taxon>
        <taxon>Mycobacteriaceae</taxon>
        <taxon>Mycobacterium</taxon>
    </lineage>
</organism>